<organism>
    <name type="scientific">Homo sapiens</name>
    <name type="common">Human</name>
    <dbReference type="NCBI Taxonomy" id="9606"/>
    <lineage>
        <taxon>Eukaryota</taxon>
        <taxon>Metazoa</taxon>
        <taxon>Chordata</taxon>
        <taxon>Craniata</taxon>
        <taxon>Vertebrata</taxon>
        <taxon>Euteleostomi</taxon>
        <taxon>Mammalia</taxon>
        <taxon>Eutheria</taxon>
        <taxon>Euarchontoglires</taxon>
        <taxon>Primates</taxon>
        <taxon>Haplorrhini</taxon>
        <taxon>Catarrhini</taxon>
        <taxon>Hominidae</taxon>
        <taxon>Homo</taxon>
    </lineage>
</organism>
<keyword id="KW-0002">3D-structure</keyword>
<keyword id="KW-0025">Alternative splicing</keyword>
<keyword id="KW-0030">Aminoacyl-tRNA synthetase</keyword>
<keyword id="KW-0037">Angiogenesis</keyword>
<keyword id="KW-0067">ATP-binding</keyword>
<keyword id="KW-0963">Cytoplasm</keyword>
<keyword id="KW-0903">Direct protein sequencing</keyword>
<keyword id="KW-0991">Intellectual disability</keyword>
<keyword id="KW-0436">Ligase</keyword>
<keyword id="KW-0523">Neurodegeneration</keyword>
<keyword id="KW-0622">Neuropathy</keyword>
<keyword id="KW-0547">Nucleotide-binding</keyword>
<keyword id="KW-0597">Phosphoprotein</keyword>
<keyword id="KW-0648">Protein biosynthesis</keyword>
<keyword id="KW-1267">Proteomics identification</keyword>
<keyword id="KW-1185">Reference proteome</keyword>
<dbReference type="EC" id="6.1.1.2" evidence="10 11"/>
<dbReference type="EMBL" id="M77804">
    <property type="protein sequence ID" value="AAA67324.1"/>
    <property type="molecule type" value="mRNA"/>
</dbReference>
<dbReference type="EMBL" id="X59892">
    <property type="protein sequence ID" value="CAA42545.1"/>
    <property type="molecule type" value="mRNA"/>
</dbReference>
<dbReference type="EMBL" id="M61715">
    <property type="protein sequence ID" value="AAA61298.1"/>
    <property type="molecule type" value="mRNA"/>
</dbReference>
<dbReference type="EMBL" id="X62570">
    <property type="protein sequence ID" value="CAA44450.1"/>
    <property type="molecule type" value="mRNA"/>
</dbReference>
<dbReference type="EMBL" id="BX248006">
    <property type="protein sequence ID" value="CAD62335.1"/>
    <property type="molecule type" value="mRNA"/>
</dbReference>
<dbReference type="EMBL" id="AK056100">
    <property type="protein sequence ID" value="BAG51626.1"/>
    <property type="molecule type" value="mRNA"/>
</dbReference>
<dbReference type="EMBL" id="AK291141">
    <property type="protein sequence ID" value="BAF83830.1"/>
    <property type="molecule type" value="mRNA"/>
</dbReference>
<dbReference type="EMBL" id="AL157871">
    <property type="status" value="NOT_ANNOTATED_CDS"/>
    <property type="molecule type" value="Genomic_DNA"/>
</dbReference>
<dbReference type="EMBL" id="CH471061">
    <property type="protein sequence ID" value="EAW81700.1"/>
    <property type="molecule type" value="Genomic_DNA"/>
</dbReference>
<dbReference type="EMBL" id="BC017489">
    <property type="protein sequence ID" value="AAH17489.1"/>
    <property type="molecule type" value="mRNA"/>
</dbReference>
<dbReference type="EMBL" id="BC095453">
    <property type="protein sequence ID" value="AAH95453.1"/>
    <property type="molecule type" value="mRNA"/>
</dbReference>
<dbReference type="EMBL" id="S82905">
    <property type="protein sequence ID" value="AAB39381.1"/>
    <property type="molecule type" value="Genomic_DNA"/>
</dbReference>
<dbReference type="EMBL" id="X67920">
    <property type="protein sequence ID" value="CAB94198.1"/>
    <property type="molecule type" value="Genomic_DNA"/>
</dbReference>
<dbReference type="EMBL" id="X67921">
    <property type="protein sequence ID" value="CAB94198.1"/>
    <property type="status" value="JOINED"/>
    <property type="molecule type" value="Genomic_DNA"/>
</dbReference>
<dbReference type="EMBL" id="X67922">
    <property type="protein sequence ID" value="CAB94198.1"/>
    <property type="status" value="JOINED"/>
    <property type="molecule type" value="Genomic_DNA"/>
</dbReference>
<dbReference type="EMBL" id="X67923">
    <property type="protein sequence ID" value="CAB94199.1"/>
    <property type="molecule type" value="Genomic_DNA"/>
</dbReference>
<dbReference type="EMBL" id="X67924">
    <property type="protein sequence ID" value="CAB94199.1"/>
    <property type="status" value="JOINED"/>
    <property type="molecule type" value="Genomic_DNA"/>
</dbReference>
<dbReference type="EMBL" id="X67925">
    <property type="protein sequence ID" value="CAB94199.1"/>
    <property type="status" value="JOINED"/>
    <property type="molecule type" value="Genomic_DNA"/>
</dbReference>
<dbReference type="EMBL" id="X67926">
    <property type="protein sequence ID" value="CAB94199.1"/>
    <property type="status" value="JOINED"/>
    <property type="molecule type" value="Genomic_DNA"/>
</dbReference>
<dbReference type="EMBL" id="X67927">
    <property type="protein sequence ID" value="CAB94199.1"/>
    <property type="status" value="JOINED"/>
    <property type="molecule type" value="Genomic_DNA"/>
</dbReference>
<dbReference type="EMBL" id="X67928">
    <property type="protein sequence ID" value="CAB94199.1"/>
    <property type="status" value="JOINED"/>
    <property type="molecule type" value="Genomic_DNA"/>
</dbReference>
<dbReference type="CCDS" id="CCDS9960.1">
    <molecule id="P23381-1"/>
</dbReference>
<dbReference type="CCDS" id="CCDS9961.1">
    <molecule id="P23381-2"/>
</dbReference>
<dbReference type="PIR" id="A41633">
    <property type="entry name" value="A41706"/>
</dbReference>
<dbReference type="RefSeq" id="NP_004175.2">
    <molecule id="P23381-1"/>
    <property type="nucleotide sequence ID" value="NM_004184.3"/>
</dbReference>
<dbReference type="RefSeq" id="NP_776049.1">
    <molecule id="P23381-1"/>
    <property type="nucleotide sequence ID" value="NM_173701.2"/>
</dbReference>
<dbReference type="RefSeq" id="NP_998810.1">
    <molecule id="P23381-2"/>
    <property type="nucleotide sequence ID" value="NM_213645.2"/>
</dbReference>
<dbReference type="RefSeq" id="NP_998811.1">
    <molecule id="P23381-2"/>
    <property type="nucleotide sequence ID" value="NM_213646.2"/>
</dbReference>
<dbReference type="RefSeq" id="XP_005268101.1">
    <property type="nucleotide sequence ID" value="XM_005268044.3"/>
</dbReference>
<dbReference type="RefSeq" id="XP_006720312.1">
    <property type="nucleotide sequence ID" value="XM_006720249.3"/>
</dbReference>
<dbReference type="RefSeq" id="XP_011535435.1">
    <property type="nucleotide sequence ID" value="XM_011537133.2"/>
</dbReference>
<dbReference type="RefSeq" id="XP_011535437.1">
    <property type="nucleotide sequence ID" value="XM_011537135.2"/>
</dbReference>
<dbReference type="RefSeq" id="XP_011535438.1">
    <molecule id="P23381-2"/>
    <property type="nucleotide sequence ID" value="XM_011537136.4"/>
</dbReference>
<dbReference type="RefSeq" id="XP_016877116.1">
    <molecule id="P23381-1"/>
    <property type="nucleotide sequence ID" value="XM_017021627.3"/>
</dbReference>
<dbReference type="RefSeq" id="XP_016877117.1">
    <property type="nucleotide sequence ID" value="XM_017021628.1"/>
</dbReference>
<dbReference type="RefSeq" id="XP_016877118.1">
    <property type="nucleotide sequence ID" value="XM_017021629.1"/>
</dbReference>
<dbReference type="RefSeq" id="XP_024305475.1">
    <molecule id="P23381-1"/>
    <property type="nucleotide sequence ID" value="XM_024449707.2"/>
</dbReference>
<dbReference type="RefSeq" id="XP_047287713.1">
    <molecule id="P23381-1"/>
    <property type="nucleotide sequence ID" value="XM_047431757.1"/>
</dbReference>
<dbReference type="RefSeq" id="XP_047287714.1">
    <molecule id="P23381-1"/>
    <property type="nucleotide sequence ID" value="XM_047431758.1"/>
</dbReference>
<dbReference type="RefSeq" id="XP_047287715.1">
    <molecule id="P23381-1"/>
    <property type="nucleotide sequence ID" value="XM_047431759.1"/>
</dbReference>
<dbReference type="RefSeq" id="XP_047287716.1">
    <molecule id="P23381-1"/>
    <property type="nucleotide sequence ID" value="XM_047431760.1"/>
</dbReference>
<dbReference type="RefSeq" id="XP_047287717.1">
    <molecule id="P23381-1"/>
    <property type="nucleotide sequence ID" value="XM_047431761.1"/>
</dbReference>
<dbReference type="RefSeq" id="XP_047287718.1">
    <molecule id="P23381-1"/>
    <property type="nucleotide sequence ID" value="XM_047431762.1"/>
</dbReference>
<dbReference type="RefSeq" id="XP_047287719.1">
    <molecule id="P23381-1"/>
    <property type="nucleotide sequence ID" value="XM_047431763.1"/>
</dbReference>
<dbReference type="RefSeq" id="XP_047287720.1">
    <molecule id="P23381-1"/>
    <property type="nucleotide sequence ID" value="XM_047431764.1"/>
</dbReference>
<dbReference type="RefSeq" id="XP_054232671.1">
    <molecule id="P23381-1"/>
    <property type="nucleotide sequence ID" value="XM_054376696.1"/>
</dbReference>
<dbReference type="RefSeq" id="XP_054232672.1">
    <molecule id="P23381-1"/>
    <property type="nucleotide sequence ID" value="XM_054376697.1"/>
</dbReference>
<dbReference type="RefSeq" id="XP_054232673.1">
    <molecule id="P23381-1"/>
    <property type="nucleotide sequence ID" value="XM_054376698.1"/>
</dbReference>
<dbReference type="RefSeq" id="XP_054232674.1">
    <molecule id="P23381-1"/>
    <property type="nucleotide sequence ID" value="XM_054376699.1"/>
</dbReference>
<dbReference type="RefSeq" id="XP_054232675.1">
    <molecule id="P23381-1"/>
    <property type="nucleotide sequence ID" value="XM_054376700.1"/>
</dbReference>
<dbReference type="RefSeq" id="XP_054232676.1">
    <molecule id="P23381-1"/>
    <property type="nucleotide sequence ID" value="XM_054376701.1"/>
</dbReference>
<dbReference type="RefSeq" id="XP_054232677.1">
    <molecule id="P23381-1"/>
    <property type="nucleotide sequence ID" value="XM_054376702.1"/>
</dbReference>
<dbReference type="RefSeq" id="XP_054232678.1">
    <molecule id="P23381-1"/>
    <property type="nucleotide sequence ID" value="XM_054376703.1"/>
</dbReference>
<dbReference type="RefSeq" id="XP_054232679.1">
    <molecule id="P23381-1"/>
    <property type="nucleotide sequence ID" value="XM_054376704.1"/>
</dbReference>
<dbReference type="RefSeq" id="XP_054232680.1">
    <molecule id="P23381-2"/>
    <property type="nucleotide sequence ID" value="XM_054376705.1"/>
</dbReference>
<dbReference type="PDB" id="1O5T">
    <property type="method" value="X-ray"/>
    <property type="resolution" value="2.50 A"/>
    <property type="chains" value="A=94-471"/>
</dbReference>
<dbReference type="PDB" id="1R6T">
    <property type="method" value="X-ray"/>
    <property type="resolution" value="2.10 A"/>
    <property type="chains" value="A/B=1-466"/>
</dbReference>
<dbReference type="PDB" id="1R6U">
    <property type="method" value="X-ray"/>
    <property type="resolution" value="2.00 A"/>
    <property type="chains" value="A/B=48-471"/>
</dbReference>
<dbReference type="PDB" id="1ULH">
    <property type="method" value="X-ray"/>
    <property type="resolution" value="2.31 A"/>
    <property type="chains" value="A/B=82-471"/>
</dbReference>
<dbReference type="PDB" id="2AKE">
    <property type="method" value="X-ray"/>
    <property type="resolution" value="3.10 A"/>
    <property type="chains" value="A=94-471"/>
</dbReference>
<dbReference type="PDB" id="2AZX">
    <property type="method" value="X-ray"/>
    <property type="resolution" value="2.80 A"/>
    <property type="chains" value="A/B=1-471"/>
</dbReference>
<dbReference type="PDB" id="2DR2">
    <property type="method" value="X-ray"/>
    <property type="resolution" value="3.00 A"/>
    <property type="chains" value="A=94-471"/>
</dbReference>
<dbReference type="PDB" id="2QUH">
    <property type="method" value="X-ray"/>
    <property type="resolution" value="2.40 A"/>
    <property type="chains" value="A/B=1-471"/>
</dbReference>
<dbReference type="PDB" id="2QUI">
    <property type="method" value="X-ray"/>
    <property type="resolution" value="2.40 A"/>
    <property type="chains" value="A/B=1-471"/>
</dbReference>
<dbReference type="PDB" id="2QUJ">
    <property type="method" value="X-ray"/>
    <property type="resolution" value="2.42 A"/>
    <property type="chains" value="A/B=1-471"/>
</dbReference>
<dbReference type="PDB" id="2QUK">
    <property type="method" value="X-ray"/>
    <property type="resolution" value="2.80 A"/>
    <property type="chains" value="A=1-471"/>
</dbReference>
<dbReference type="PDB" id="5UJI">
    <property type="method" value="X-ray"/>
    <property type="resolution" value="2.79 A"/>
    <property type="chains" value="A/B=97-471"/>
</dbReference>
<dbReference type="PDB" id="5UJJ">
    <property type="method" value="X-ray"/>
    <property type="resolution" value="2.10 A"/>
    <property type="chains" value="A/B=1-471"/>
</dbReference>
<dbReference type="PDBsum" id="1O5T"/>
<dbReference type="PDBsum" id="1R6T"/>
<dbReference type="PDBsum" id="1R6U"/>
<dbReference type="PDBsum" id="1ULH"/>
<dbReference type="PDBsum" id="2AKE"/>
<dbReference type="PDBsum" id="2AZX"/>
<dbReference type="PDBsum" id="2DR2"/>
<dbReference type="PDBsum" id="2QUH"/>
<dbReference type="PDBsum" id="2QUI"/>
<dbReference type="PDBsum" id="2QUJ"/>
<dbReference type="PDBsum" id="2QUK"/>
<dbReference type="PDBsum" id="5UJI"/>
<dbReference type="PDBsum" id="5UJJ"/>
<dbReference type="SMR" id="P23381"/>
<dbReference type="BioGRID" id="113292">
    <property type="interactions" value="195"/>
</dbReference>
<dbReference type="DIP" id="DIP-29493N"/>
<dbReference type="FunCoup" id="P23381">
    <property type="interactions" value="3101"/>
</dbReference>
<dbReference type="IntAct" id="P23381">
    <property type="interactions" value="28"/>
</dbReference>
<dbReference type="MINT" id="P23381"/>
<dbReference type="STRING" id="9606.ENSP00000347495"/>
<dbReference type="DrugBank" id="DB00150">
    <property type="generic name" value="Tryptophan"/>
</dbReference>
<dbReference type="DrugBank" id="DB04537">
    <property type="generic name" value="Tryptophanamide"/>
</dbReference>
<dbReference type="DrugBank" id="DB01831">
    <property type="generic name" value="Tryptophanyl-5'amp"/>
</dbReference>
<dbReference type="MoonProt" id="P23381"/>
<dbReference type="GlyGen" id="P23381">
    <property type="glycosylation" value="2 sites, 1 N-linked glycan (1 site), 1 O-linked glycan (1 site)"/>
</dbReference>
<dbReference type="iPTMnet" id="P23381"/>
<dbReference type="MetOSite" id="P23381"/>
<dbReference type="PhosphoSitePlus" id="P23381"/>
<dbReference type="SwissPalm" id="P23381"/>
<dbReference type="BioMuta" id="WARS"/>
<dbReference type="DMDM" id="135191"/>
<dbReference type="OGP" id="P23381"/>
<dbReference type="jPOST" id="P23381"/>
<dbReference type="MassIVE" id="P23381"/>
<dbReference type="PaxDb" id="9606-ENSP00000347495"/>
<dbReference type="PeptideAtlas" id="P23381"/>
<dbReference type="ProteomicsDB" id="54085">
    <molecule id="P23381-1"/>
</dbReference>
<dbReference type="ProteomicsDB" id="54086">
    <molecule id="P23381-2"/>
</dbReference>
<dbReference type="Pumba" id="P23381"/>
<dbReference type="ABCD" id="P23381">
    <property type="antibodies" value="4 sequenced antibodies"/>
</dbReference>
<dbReference type="Antibodypedia" id="27522">
    <property type="antibodies" value="279 antibodies from 31 providers"/>
</dbReference>
<dbReference type="DNASU" id="7453"/>
<dbReference type="Ensembl" id="ENST00000344102.9">
    <molecule id="P23381-2"/>
    <property type="protein sequence ID" value="ENSP00000339485.5"/>
    <property type="gene ID" value="ENSG00000140105.18"/>
</dbReference>
<dbReference type="Ensembl" id="ENST00000355338.6">
    <molecule id="P23381-1"/>
    <property type="protein sequence ID" value="ENSP00000347495.2"/>
    <property type="gene ID" value="ENSG00000140105.18"/>
</dbReference>
<dbReference type="Ensembl" id="ENST00000358655.8">
    <molecule id="P23381-2"/>
    <property type="protein sequence ID" value="ENSP00000351481.4"/>
    <property type="gene ID" value="ENSG00000140105.18"/>
</dbReference>
<dbReference type="Ensembl" id="ENST00000392882.7">
    <molecule id="P23381-1"/>
    <property type="protein sequence ID" value="ENSP00000376620.2"/>
    <property type="gene ID" value="ENSG00000140105.18"/>
</dbReference>
<dbReference type="Ensembl" id="ENST00000556645.5">
    <molecule id="P23381-2"/>
    <property type="protein sequence ID" value="ENSP00000451887.1"/>
    <property type="gene ID" value="ENSG00000140105.18"/>
</dbReference>
<dbReference type="Ensembl" id="ENST00000557135.5">
    <molecule id="P23381-1"/>
    <property type="protein sequence ID" value="ENSP00000451460.1"/>
    <property type="gene ID" value="ENSG00000140105.18"/>
</dbReference>
<dbReference type="GeneID" id="7453"/>
<dbReference type="KEGG" id="hsa:7453"/>
<dbReference type="MANE-Select" id="ENST00000392882.7">
    <property type="protein sequence ID" value="ENSP00000376620.2"/>
    <property type="RefSeq nucleotide sequence ID" value="NM_004184.4"/>
    <property type="RefSeq protein sequence ID" value="NP_004175.2"/>
</dbReference>
<dbReference type="UCSC" id="uc001yhg.3">
    <molecule id="P23381-1"/>
    <property type="organism name" value="human"/>
</dbReference>
<dbReference type="AGR" id="HGNC:12729"/>
<dbReference type="CTD" id="7453"/>
<dbReference type="DisGeNET" id="7453"/>
<dbReference type="GeneCards" id="WARS1"/>
<dbReference type="GeneReviews" id="WARS1"/>
<dbReference type="HGNC" id="HGNC:12729">
    <property type="gene designation" value="WARS1"/>
</dbReference>
<dbReference type="HPA" id="ENSG00000140105">
    <property type="expression patterns" value="Tissue enhanced (placenta)"/>
</dbReference>
<dbReference type="MalaCards" id="WARS1"/>
<dbReference type="MIM" id="191050">
    <property type="type" value="gene"/>
</dbReference>
<dbReference type="MIM" id="617721">
    <property type="type" value="phenotype"/>
</dbReference>
<dbReference type="MIM" id="620317">
    <property type="type" value="phenotype"/>
</dbReference>
<dbReference type="neXtProt" id="NX_P23381"/>
<dbReference type="OpenTargets" id="ENSG00000140105"/>
<dbReference type="Orphanet" id="2512">
    <property type="disease" value="Autosomal recessive primary microcephaly"/>
</dbReference>
<dbReference type="Orphanet" id="528084">
    <property type="disease" value="Non-specific syndromic intellectual disability"/>
</dbReference>
<dbReference type="PharmGKB" id="PA37340"/>
<dbReference type="VEuPathDB" id="HostDB:ENSG00000140105"/>
<dbReference type="eggNOG" id="KOG2145">
    <property type="taxonomic scope" value="Eukaryota"/>
</dbReference>
<dbReference type="GeneTree" id="ENSGT00940000153724"/>
<dbReference type="HOGENOM" id="CLU_032621_0_1_1"/>
<dbReference type="InParanoid" id="P23381"/>
<dbReference type="OMA" id="SIYHRFM"/>
<dbReference type="OrthoDB" id="10261385at2759"/>
<dbReference type="PAN-GO" id="P23381">
    <property type="GO annotations" value="3 GO annotations based on evolutionary models"/>
</dbReference>
<dbReference type="PhylomeDB" id="P23381"/>
<dbReference type="TreeFam" id="TF105669"/>
<dbReference type="BRENDA" id="6.1.1.2">
    <property type="organism ID" value="2681"/>
</dbReference>
<dbReference type="PathwayCommons" id="P23381"/>
<dbReference type="Reactome" id="R-HSA-379716">
    <property type="pathway name" value="Cytosolic tRNA aminoacylation"/>
</dbReference>
<dbReference type="SignaLink" id="P23381"/>
<dbReference type="SIGNOR" id="P23381"/>
<dbReference type="BioGRID-ORCS" id="7453">
    <property type="hits" value="781 hits in 1175 CRISPR screens"/>
</dbReference>
<dbReference type="ChiTaRS" id="WARS">
    <property type="organism name" value="human"/>
</dbReference>
<dbReference type="EvolutionaryTrace" id="P23381"/>
<dbReference type="GeneWiki" id="WARS_(gene)"/>
<dbReference type="GenomeRNAi" id="7453"/>
<dbReference type="Pharos" id="P23381">
    <property type="development level" value="Tbio"/>
</dbReference>
<dbReference type="PRO" id="PR:P23381"/>
<dbReference type="Proteomes" id="UP000005640">
    <property type="component" value="Chromosome 14"/>
</dbReference>
<dbReference type="RNAct" id="P23381">
    <property type="molecule type" value="protein"/>
</dbReference>
<dbReference type="Bgee" id="ENSG00000140105">
    <property type="expression patterns" value="Expressed in monocyte and 204 other cell types or tissues"/>
</dbReference>
<dbReference type="ExpressionAtlas" id="P23381">
    <property type="expression patterns" value="baseline and differential"/>
</dbReference>
<dbReference type="GO" id="GO:0005737">
    <property type="term" value="C:cytoplasm"/>
    <property type="evidence" value="ECO:0000318"/>
    <property type="project" value="GO_Central"/>
</dbReference>
<dbReference type="GO" id="GO:0005829">
    <property type="term" value="C:cytosol"/>
    <property type="evidence" value="ECO:0000314"/>
    <property type="project" value="HPA"/>
</dbReference>
<dbReference type="GO" id="GO:0070062">
    <property type="term" value="C:extracellular exosome"/>
    <property type="evidence" value="ECO:0007005"/>
    <property type="project" value="UniProtKB"/>
</dbReference>
<dbReference type="GO" id="GO:0005634">
    <property type="term" value="C:nucleus"/>
    <property type="evidence" value="ECO:0000314"/>
    <property type="project" value="CAFA"/>
</dbReference>
<dbReference type="GO" id="GO:0032991">
    <property type="term" value="C:protein-containing complex"/>
    <property type="evidence" value="ECO:0000315"/>
    <property type="project" value="CAFA"/>
</dbReference>
<dbReference type="GO" id="GO:0005524">
    <property type="term" value="F:ATP binding"/>
    <property type="evidence" value="ECO:0007669"/>
    <property type="project" value="UniProtKB-KW"/>
</dbReference>
<dbReference type="GO" id="GO:0019210">
    <property type="term" value="F:kinase inhibitor activity"/>
    <property type="evidence" value="ECO:0000314"/>
    <property type="project" value="CAFA"/>
</dbReference>
<dbReference type="GO" id="GO:0019904">
    <property type="term" value="F:protein domain specific binding"/>
    <property type="evidence" value="ECO:0000353"/>
    <property type="project" value="CAFA"/>
</dbReference>
<dbReference type="GO" id="GO:0042803">
    <property type="term" value="F:protein homodimerization activity"/>
    <property type="evidence" value="ECO:0000314"/>
    <property type="project" value="UniProtKB"/>
</dbReference>
<dbReference type="GO" id="GO:0019901">
    <property type="term" value="F:protein kinase binding"/>
    <property type="evidence" value="ECO:0000353"/>
    <property type="project" value="CAFA"/>
</dbReference>
<dbReference type="GO" id="GO:0004830">
    <property type="term" value="F:tryptophan-tRNA ligase activity"/>
    <property type="evidence" value="ECO:0000315"/>
    <property type="project" value="UniProtKB"/>
</dbReference>
<dbReference type="GO" id="GO:0001525">
    <property type="term" value="P:angiogenesis"/>
    <property type="evidence" value="ECO:0007669"/>
    <property type="project" value="UniProtKB-KW"/>
</dbReference>
<dbReference type="GO" id="GO:0008285">
    <property type="term" value="P:negative regulation of cell population proliferation"/>
    <property type="evidence" value="ECO:0000304"/>
    <property type="project" value="ProtInc"/>
</dbReference>
<dbReference type="GO" id="GO:0006469">
    <property type="term" value="P:negative regulation of protein kinase activity"/>
    <property type="evidence" value="ECO:0000314"/>
    <property type="project" value="CAFA"/>
</dbReference>
<dbReference type="GO" id="GO:0010628">
    <property type="term" value="P:positive regulation of gene expression"/>
    <property type="evidence" value="ECO:0000314"/>
    <property type="project" value="CAFA"/>
</dbReference>
<dbReference type="GO" id="GO:0031334">
    <property type="term" value="P:positive regulation of protein-containing complex assembly"/>
    <property type="evidence" value="ECO:0000315"/>
    <property type="project" value="CAFA"/>
</dbReference>
<dbReference type="GO" id="GO:0045765">
    <property type="term" value="P:regulation of angiogenesis"/>
    <property type="evidence" value="ECO:0000314"/>
    <property type="project" value="UniProtKB"/>
</dbReference>
<dbReference type="GO" id="GO:0006412">
    <property type="term" value="P:translation"/>
    <property type="evidence" value="ECO:0000304"/>
    <property type="project" value="ProtInc"/>
</dbReference>
<dbReference type="GO" id="GO:0006436">
    <property type="term" value="P:tryptophanyl-tRNA aminoacylation"/>
    <property type="evidence" value="ECO:0000318"/>
    <property type="project" value="GO_Central"/>
</dbReference>
<dbReference type="CDD" id="cd00806">
    <property type="entry name" value="TrpRS_core"/>
    <property type="match status" value="1"/>
</dbReference>
<dbReference type="CDD" id="cd00936">
    <property type="entry name" value="WEPRS_RNA"/>
    <property type="match status" value="1"/>
</dbReference>
<dbReference type="FunFam" id="1.10.287.10:FF:000006">
    <property type="entry name" value="Bifunctional glutamate/proline--tRNA ligase"/>
    <property type="match status" value="1"/>
</dbReference>
<dbReference type="FunFam" id="1.10.240.10:FF:000003">
    <property type="entry name" value="Tryptophan--tRNA ligase, cytoplasmic"/>
    <property type="match status" value="1"/>
</dbReference>
<dbReference type="FunFam" id="3.40.50.620:FF:000454">
    <property type="entry name" value="Tryptophan--tRNA ligase, cytoplasmic"/>
    <property type="match status" value="1"/>
</dbReference>
<dbReference type="Gene3D" id="3.40.50.620">
    <property type="entry name" value="HUPs"/>
    <property type="match status" value="1"/>
</dbReference>
<dbReference type="Gene3D" id="1.10.287.10">
    <property type="entry name" value="S15/NS1, RNA-binding"/>
    <property type="match status" value="1"/>
</dbReference>
<dbReference type="Gene3D" id="1.10.240.10">
    <property type="entry name" value="Tyrosyl-Transfer RNA Synthetase"/>
    <property type="match status" value="1"/>
</dbReference>
<dbReference type="InterPro" id="IPR001412">
    <property type="entry name" value="aa-tRNA-synth_I_CS"/>
</dbReference>
<dbReference type="InterPro" id="IPR002305">
    <property type="entry name" value="aa-tRNA-synth_Ic"/>
</dbReference>
<dbReference type="InterPro" id="IPR014729">
    <property type="entry name" value="Rossmann-like_a/b/a_fold"/>
</dbReference>
<dbReference type="InterPro" id="IPR002306">
    <property type="entry name" value="Trp-tRNA-ligase"/>
</dbReference>
<dbReference type="InterPro" id="IPR009068">
    <property type="entry name" value="uS15_NS1_RNA-bd_sf"/>
</dbReference>
<dbReference type="InterPro" id="IPR000738">
    <property type="entry name" value="WHEP-TRS_dom"/>
</dbReference>
<dbReference type="NCBIfam" id="TIGR00233">
    <property type="entry name" value="trpS"/>
    <property type="match status" value="1"/>
</dbReference>
<dbReference type="PANTHER" id="PTHR10055:SF1">
    <property type="entry name" value="TRYPTOPHAN--TRNA LIGASE, CYTOPLASMIC"/>
    <property type="match status" value="1"/>
</dbReference>
<dbReference type="PANTHER" id="PTHR10055">
    <property type="entry name" value="TRYPTOPHANYL-TRNA SYNTHETASE"/>
    <property type="match status" value="1"/>
</dbReference>
<dbReference type="Pfam" id="PF00579">
    <property type="entry name" value="tRNA-synt_1b"/>
    <property type="match status" value="1"/>
</dbReference>
<dbReference type="Pfam" id="PF00458">
    <property type="entry name" value="WHEP-TRS"/>
    <property type="match status" value="1"/>
</dbReference>
<dbReference type="PRINTS" id="PR01039">
    <property type="entry name" value="TRNASYNTHTRP"/>
</dbReference>
<dbReference type="SMART" id="SM00991">
    <property type="entry name" value="WHEP-TRS"/>
    <property type="match status" value="1"/>
</dbReference>
<dbReference type="SUPFAM" id="SSF52374">
    <property type="entry name" value="Nucleotidylyl transferase"/>
    <property type="match status" value="1"/>
</dbReference>
<dbReference type="SUPFAM" id="SSF47060">
    <property type="entry name" value="S15/NS1 RNA-binding domain"/>
    <property type="match status" value="1"/>
</dbReference>
<dbReference type="PROSITE" id="PS00178">
    <property type="entry name" value="AA_TRNA_LIGASE_I"/>
    <property type="match status" value="1"/>
</dbReference>
<dbReference type="PROSITE" id="PS00762">
    <property type="entry name" value="WHEP_TRS_1"/>
    <property type="match status" value="1"/>
</dbReference>
<dbReference type="PROSITE" id="PS51185">
    <property type="entry name" value="WHEP_TRS_2"/>
    <property type="match status" value="1"/>
</dbReference>
<gene>
    <name evidence="21" type="primary">WARS1</name>
    <name type="synonym">IFI53</name>
    <name type="synonym">WARS</name>
    <name type="synonym">WRS</name>
</gene>
<proteinExistence type="evidence at protein level"/>
<reference key="1">
    <citation type="journal article" date="1991" name="J. Biol. Chem.">
        <title>Interferon induces tryptophanyl-tRNA synthetase expression in human fibroblasts.</title>
        <authorList>
            <person name="Rubin B.Y."/>
            <person name="Anderson S.L."/>
            <person name="Xing L."/>
            <person name="Powell R.J."/>
            <person name="Tate W.P."/>
        </authorList>
    </citation>
    <scope>NUCLEOTIDE SEQUENCE [MRNA] (ISOFORM 1)</scope>
    <scope>FUNCTION</scope>
    <scope>CATALYTIC ACTIVITY</scope>
</reference>
<reference key="2">
    <citation type="journal article" date="1991" name="Proc. Natl. Acad. Sci. U.S.A.">
        <title>Human interferon gamma potently induces the synthesis of a 55-kDa protein (gamma 2) highly homologous to rabbit peptide chain release factor and bovine tryptophanyl-tRNA synthetase.</title>
        <authorList>
            <person name="Fleckner J."/>
            <person name="Rasmussen H.H."/>
            <person name="Justesen J."/>
        </authorList>
    </citation>
    <scope>NUCLEOTIDE SEQUENCE [MRNA] (ISOFORM 1)</scope>
</reference>
<reference key="3">
    <citation type="journal article" date="1991" name="Gene">
        <title>Cloning and nucleotide sequence of the structural gene encoding for human tryptophanyl-tRNA synthetase.</title>
        <authorList>
            <person name="Frolova L.Y."/>
            <person name="Sudomoina M.A."/>
            <person name="Grigorieva A.Y."/>
            <person name="Zinovieva O.L."/>
            <person name="Kisselev L.L."/>
        </authorList>
    </citation>
    <scope>NUCLEOTIDE SEQUENCE [MRNA] (ISOFORM 1)</scope>
</reference>
<reference key="4">
    <citation type="journal article" date="1992" name="EMBO J.">
        <title>Molecular cloning and characterization of an interferon induced human cDNA with sequence homology to a mammalian peptide chain release factor.</title>
        <authorList>
            <person name="Buwitt U."/>
            <person name="Flohr T."/>
            <person name="Boettger E.C."/>
        </authorList>
    </citation>
    <scope>NUCLEOTIDE SEQUENCE [MRNA] (ISOFORM 1)</scope>
</reference>
<reference key="5">
    <citation type="submission" date="2003-02" db="EMBL/GenBank/DDBJ databases">
        <title>Full-length cDNA libraries and normalization.</title>
        <authorList>
            <person name="Li W.B."/>
            <person name="Gruber C."/>
            <person name="Jessee J."/>
            <person name="Polayes D."/>
        </authorList>
    </citation>
    <scope>NUCLEOTIDE SEQUENCE [LARGE SCALE MRNA] (ISOFORM 1)</scope>
    <source>
        <tissue>Fetal liver</tissue>
    </source>
</reference>
<reference key="6">
    <citation type="journal article" date="2004" name="Nat. Genet.">
        <title>Complete sequencing and characterization of 21,243 full-length human cDNAs.</title>
        <authorList>
            <person name="Ota T."/>
            <person name="Suzuki Y."/>
            <person name="Nishikawa T."/>
            <person name="Otsuki T."/>
            <person name="Sugiyama T."/>
            <person name="Irie R."/>
            <person name="Wakamatsu A."/>
            <person name="Hayashi K."/>
            <person name="Sato H."/>
            <person name="Nagai K."/>
            <person name="Kimura K."/>
            <person name="Makita H."/>
            <person name="Sekine M."/>
            <person name="Obayashi M."/>
            <person name="Nishi T."/>
            <person name="Shibahara T."/>
            <person name="Tanaka T."/>
            <person name="Ishii S."/>
            <person name="Yamamoto J."/>
            <person name="Saito K."/>
            <person name="Kawai Y."/>
            <person name="Isono Y."/>
            <person name="Nakamura Y."/>
            <person name="Nagahari K."/>
            <person name="Murakami K."/>
            <person name="Yasuda T."/>
            <person name="Iwayanagi T."/>
            <person name="Wagatsuma M."/>
            <person name="Shiratori A."/>
            <person name="Sudo H."/>
            <person name="Hosoiri T."/>
            <person name="Kaku Y."/>
            <person name="Kodaira H."/>
            <person name="Kondo H."/>
            <person name="Sugawara M."/>
            <person name="Takahashi M."/>
            <person name="Kanda K."/>
            <person name="Yokoi T."/>
            <person name="Furuya T."/>
            <person name="Kikkawa E."/>
            <person name="Omura Y."/>
            <person name="Abe K."/>
            <person name="Kamihara K."/>
            <person name="Katsuta N."/>
            <person name="Sato K."/>
            <person name="Tanikawa M."/>
            <person name="Yamazaki M."/>
            <person name="Ninomiya K."/>
            <person name="Ishibashi T."/>
            <person name="Yamashita H."/>
            <person name="Murakawa K."/>
            <person name="Fujimori K."/>
            <person name="Tanai H."/>
            <person name="Kimata M."/>
            <person name="Watanabe M."/>
            <person name="Hiraoka S."/>
            <person name="Chiba Y."/>
            <person name="Ishida S."/>
            <person name="Ono Y."/>
            <person name="Takiguchi S."/>
            <person name="Watanabe S."/>
            <person name="Yosida M."/>
            <person name="Hotuta T."/>
            <person name="Kusano J."/>
            <person name="Kanehori K."/>
            <person name="Takahashi-Fujii A."/>
            <person name="Hara H."/>
            <person name="Tanase T.-O."/>
            <person name="Nomura Y."/>
            <person name="Togiya S."/>
            <person name="Komai F."/>
            <person name="Hara R."/>
            <person name="Takeuchi K."/>
            <person name="Arita M."/>
            <person name="Imose N."/>
            <person name="Musashino K."/>
            <person name="Yuuki H."/>
            <person name="Oshima A."/>
            <person name="Sasaki N."/>
            <person name="Aotsuka S."/>
            <person name="Yoshikawa Y."/>
            <person name="Matsunawa H."/>
            <person name="Ichihara T."/>
            <person name="Shiohata N."/>
            <person name="Sano S."/>
            <person name="Moriya S."/>
            <person name="Momiyama H."/>
            <person name="Satoh N."/>
            <person name="Takami S."/>
            <person name="Terashima Y."/>
            <person name="Suzuki O."/>
            <person name="Nakagawa S."/>
            <person name="Senoh A."/>
            <person name="Mizoguchi H."/>
            <person name="Goto Y."/>
            <person name="Shimizu F."/>
            <person name="Wakebe H."/>
            <person name="Hishigaki H."/>
            <person name="Watanabe T."/>
            <person name="Sugiyama A."/>
            <person name="Takemoto M."/>
            <person name="Kawakami B."/>
            <person name="Yamazaki M."/>
            <person name="Watanabe K."/>
            <person name="Kumagai A."/>
            <person name="Itakura S."/>
            <person name="Fukuzumi Y."/>
            <person name="Fujimori Y."/>
            <person name="Komiyama M."/>
            <person name="Tashiro H."/>
            <person name="Tanigami A."/>
            <person name="Fujiwara T."/>
            <person name="Ono T."/>
            <person name="Yamada K."/>
            <person name="Fujii Y."/>
            <person name="Ozaki K."/>
            <person name="Hirao M."/>
            <person name="Ohmori Y."/>
            <person name="Kawabata A."/>
            <person name="Hikiji T."/>
            <person name="Kobatake N."/>
            <person name="Inagaki H."/>
            <person name="Ikema Y."/>
            <person name="Okamoto S."/>
            <person name="Okitani R."/>
            <person name="Kawakami T."/>
            <person name="Noguchi S."/>
            <person name="Itoh T."/>
            <person name="Shigeta K."/>
            <person name="Senba T."/>
            <person name="Matsumura K."/>
            <person name="Nakajima Y."/>
            <person name="Mizuno T."/>
            <person name="Morinaga M."/>
            <person name="Sasaki M."/>
            <person name="Togashi T."/>
            <person name="Oyama M."/>
            <person name="Hata H."/>
            <person name="Watanabe M."/>
            <person name="Komatsu T."/>
            <person name="Mizushima-Sugano J."/>
            <person name="Satoh T."/>
            <person name="Shirai Y."/>
            <person name="Takahashi Y."/>
            <person name="Nakagawa K."/>
            <person name="Okumura K."/>
            <person name="Nagase T."/>
            <person name="Nomura N."/>
            <person name="Kikuchi H."/>
            <person name="Masuho Y."/>
            <person name="Yamashita R."/>
            <person name="Nakai K."/>
            <person name="Yada T."/>
            <person name="Nakamura Y."/>
            <person name="Ohara O."/>
            <person name="Isogai T."/>
            <person name="Sugano S."/>
        </authorList>
    </citation>
    <scope>NUCLEOTIDE SEQUENCE [LARGE SCALE MRNA] (ISOFORMS 1 AND 2)</scope>
    <source>
        <tissue>Teratocarcinoma</tissue>
    </source>
</reference>
<reference key="7">
    <citation type="journal article" date="2003" name="Nature">
        <title>The DNA sequence and analysis of human chromosome 14.</title>
        <authorList>
            <person name="Heilig R."/>
            <person name="Eckenberg R."/>
            <person name="Petit J.-L."/>
            <person name="Fonknechten N."/>
            <person name="Da Silva C."/>
            <person name="Cattolico L."/>
            <person name="Levy M."/>
            <person name="Barbe V."/>
            <person name="De Berardinis V."/>
            <person name="Ureta-Vidal A."/>
            <person name="Pelletier E."/>
            <person name="Vico V."/>
            <person name="Anthouard V."/>
            <person name="Rowen L."/>
            <person name="Madan A."/>
            <person name="Qin S."/>
            <person name="Sun H."/>
            <person name="Du H."/>
            <person name="Pepin K."/>
            <person name="Artiguenave F."/>
            <person name="Robert C."/>
            <person name="Cruaud C."/>
            <person name="Bruels T."/>
            <person name="Jaillon O."/>
            <person name="Friedlander L."/>
            <person name="Samson G."/>
            <person name="Brottier P."/>
            <person name="Cure S."/>
            <person name="Segurens B."/>
            <person name="Aniere F."/>
            <person name="Samain S."/>
            <person name="Crespeau H."/>
            <person name="Abbasi N."/>
            <person name="Aiach N."/>
            <person name="Boscus D."/>
            <person name="Dickhoff R."/>
            <person name="Dors M."/>
            <person name="Dubois I."/>
            <person name="Friedman C."/>
            <person name="Gouyvenoux M."/>
            <person name="James R."/>
            <person name="Madan A."/>
            <person name="Mairey-Estrada B."/>
            <person name="Mangenot S."/>
            <person name="Martins N."/>
            <person name="Menard M."/>
            <person name="Oztas S."/>
            <person name="Ratcliffe A."/>
            <person name="Shaffer T."/>
            <person name="Trask B."/>
            <person name="Vacherie B."/>
            <person name="Bellemere C."/>
            <person name="Belser C."/>
            <person name="Besnard-Gonnet M."/>
            <person name="Bartol-Mavel D."/>
            <person name="Boutard M."/>
            <person name="Briez-Silla S."/>
            <person name="Combette S."/>
            <person name="Dufosse-Laurent V."/>
            <person name="Ferron C."/>
            <person name="Lechaplais C."/>
            <person name="Louesse C."/>
            <person name="Muselet D."/>
            <person name="Magdelenat G."/>
            <person name="Pateau E."/>
            <person name="Petit E."/>
            <person name="Sirvain-Trukniewicz P."/>
            <person name="Trybou A."/>
            <person name="Vega-Czarny N."/>
            <person name="Bataille E."/>
            <person name="Bluet E."/>
            <person name="Bordelais I."/>
            <person name="Dubois M."/>
            <person name="Dumont C."/>
            <person name="Guerin T."/>
            <person name="Haffray S."/>
            <person name="Hammadi R."/>
            <person name="Muanga J."/>
            <person name="Pellouin V."/>
            <person name="Robert D."/>
            <person name="Wunderle E."/>
            <person name="Gauguet G."/>
            <person name="Roy A."/>
            <person name="Sainte-Marthe L."/>
            <person name="Verdier J."/>
            <person name="Verdier-Discala C."/>
            <person name="Hillier L.W."/>
            <person name="Fulton L."/>
            <person name="McPherson J."/>
            <person name="Matsuda F."/>
            <person name="Wilson R."/>
            <person name="Scarpelli C."/>
            <person name="Gyapay G."/>
            <person name="Wincker P."/>
            <person name="Saurin W."/>
            <person name="Quetier F."/>
            <person name="Waterston R."/>
            <person name="Hood L."/>
            <person name="Weissenbach J."/>
        </authorList>
    </citation>
    <scope>NUCLEOTIDE SEQUENCE [LARGE SCALE GENOMIC DNA]</scope>
</reference>
<reference key="8">
    <citation type="submission" date="2005-07" db="EMBL/GenBank/DDBJ databases">
        <authorList>
            <person name="Mural R.J."/>
            <person name="Istrail S."/>
            <person name="Sutton G.G."/>
            <person name="Florea L."/>
            <person name="Halpern A.L."/>
            <person name="Mobarry C.M."/>
            <person name="Lippert R."/>
            <person name="Walenz B."/>
            <person name="Shatkay H."/>
            <person name="Dew I."/>
            <person name="Miller J.R."/>
            <person name="Flanigan M.J."/>
            <person name="Edwards N.J."/>
            <person name="Bolanos R."/>
            <person name="Fasulo D."/>
            <person name="Halldorsson B.V."/>
            <person name="Hannenhalli S."/>
            <person name="Turner R."/>
            <person name="Yooseph S."/>
            <person name="Lu F."/>
            <person name="Nusskern D.R."/>
            <person name="Shue B.C."/>
            <person name="Zheng X.H."/>
            <person name="Zhong F."/>
            <person name="Delcher A.L."/>
            <person name="Huson D.H."/>
            <person name="Kravitz S.A."/>
            <person name="Mouchard L."/>
            <person name="Reinert K."/>
            <person name="Remington K.A."/>
            <person name="Clark A.G."/>
            <person name="Waterman M.S."/>
            <person name="Eichler E.E."/>
            <person name="Adams M.D."/>
            <person name="Hunkapiller M.W."/>
            <person name="Myers E.W."/>
            <person name="Venter J.C."/>
        </authorList>
    </citation>
    <scope>NUCLEOTIDE SEQUENCE [LARGE SCALE GENOMIC DNA]</scope>
</reference>
<reference key="9">
    <citation type="journal article" date="2004" name="Genome Res.">
        <title>The status, quality, and expansion of the NIH full-length cDNA project: the Mammalian Gene Collection (MGC).</title>
        <authorList>
            <consortium name="The MGC Project Team"/>
        </authorList>
    </citation>
    <scope>NUCLEOTIDE SEQUENCE [LARGE SCALE MRNA] (ISOFORM 1)</scope>
    <source>
        <tissue>Blood</tissue>
        <tissue>Lymph</tissue>
    </source>
</reference>
<reference key="10">
    <citation type="journal article" date="1996" name="Mol. Biol. (Mosk.)">
        <title>Alternative splicing of 5'-terminal exons of the human tryptophanyl-tRNA synthetase gene.</title>
        <authorList>
            <person name="Sokolova I.V."/>
            <person name="Narovlianskii A.N."/>
            <person name="Amchenkova A.M."/>
            <person name="Turpaev K.T."/>
        </authorList>
    </citation>
    <scope>NUCLEOTIDE SEQUENCE [GENOMIC DNA] OF 1-13</scope>
</reference>
<reference key="11">
    <citation type="journal article" date="1993" name="Gene">
        <title>The human gene encoding tryptophanyl-tRNA synthetase: interferon-response elements and exon-intron organization.</title>
        <authorList>
            <person name="Frolova L.Y."/>
            <person name="Grigorieva A.Y."/>
            <person name="Sudomoina M.A."/>
            <person name="Kisselev L.L."/>
        </authorList>
    </citation>
    <scope>NUCLEOTIDE SEQUENCE [GENOMIC DNA] OF 1-141 AND 182-471</scope>
    <source>
        <tissue>Sperm</tissue>
    </source>
</reference>
<reference key="12">
    <citation type="journal article" date="1993" name="J. Invest. Dermatol.">
        <title>Gamma interferon potently induces tryptophanyl-tRNA synthetase expression in human keratinocytes.</title>
        <authorList>
            <person name="Reano A."/>
            <person name="Richard M.H."/>
            <person name="Denoroy L."/>
            <person name="Viac J."/>
            <person name="Benedetto J.P."/>
            <person name="Schmitt D."/>
        </authorList>
    </citation>
    <scope>PROTEIN SEQUENCE OF 2-19; 142-162; 205-220; 278-298; 350-366 AND 433-448</scope>
    <scope>INDUCTION</scope>
    <source>
        <tissue>Keratinocyte</tissue>
    </source>
</reference>
<reference key="13">
    <citation type="submission" date="2008-03" db="UniProtKB">
        <authorList>
            <person name="Bienvenut W.V."/>
            <person name="Heiserich L."/>
            <person name="Gottlieb E."/>
        </authorList>
    </citation>
    <scope>PROTEIN SEQUENCE OF 2-24; 97-106; 433-448 AND 465-471</scope>
    <scope>CLEAVAGE OF INITIATOR METHIONINE</scope>
    <scope>IDENTIFICATION BY MASS SPECTROMETRY</scope>
    <source>
        <tissue>Colon carcinoma</tissue>
    </source>
</reference>
<reference key="14">
    <citation type="journal article" date="2002" name="Proc. Natl. Acad. Sci. U.S.A.">
        <title>A human aminoacyl-tRNA synthetase as a regulator of angiogenesis.</title>
        <authorList>
            <person name="Wakasugi K."/>
            <person name="Slike B.M."/>
            <person name="Hood J."/>
            <person name="Otani A."/>
            <person name="Ewalt K.L."/>
            <person name="Friedlander M."/>
            <person name="Cheresh D.A."/>
            <person name="Schimmel P."/>
        </authorList>
    </citation>
    <scope>PROTEIN SEQUENCE OF 71-75 AND 91-98</scope>
    <scope>PROTEOLYTIC CLEAVAGE</scope>
    <scope>FUNCTION (ISOFORMS 1 AND 2)</scope>
</reference>
<reference key="15">
    <citation type="journal article" date="1992" name="Electrophoresis">
        <title>Microsequences of 145 proteins recorded in the two-dimensional gel protein database of normal human epidermal keratinocytes.</title>
        <authorList>
            <person name="Rasmussen H.H."/>
            <person name="van Damme J."/>
            <person name="Puype M."/>
            <person name="Gesser B."/>
            <person name="Celis J.E."/>
            <person name="Vandekerckhove J."/>
        </authorList>
    </citation>
    <scope>PROTEIN SEQUENCE OF 265-276; 278-296; 299-317 AND 350-365</scope>
    <source>
        <tissue>Keratinocyte</tissue>
    </source>
</reference>
<reference key="16">
    <citation type="journal article" date="1992" name="FEBS Lett.">
        <title>An interferon-induced protein with release factor activity is a tryptophanyl-tRNA synthetase.</title>
        <authorList>
            <person name="Bange F.-C."/>
            <person name="Flohr T."/>
            <person name="Buwitt U."/>
            <person name="Boettger E.C."/>
        </authorList>
    </citation>
    <scope>FUNCTION</scope>
</reference>
<reference key="17">
    <citation type="journal article" date="1995" name="J. Biol. Chem.">
        <title>Transcriptional regulation of the interferon-gamma-inducible tryptophanyl-tRNA synthetase includes alternative splicing.</title>
        <authorList>
            <person name="Tolstrup A.B."/>
            <person name="Bejder A."/>
            <person name="Fleckner J."/>
            <person name="Justesen J."/>
        </authorList>
    </citation>
    <scope>ALTERNATIVE SPLICING</scope>
</reference>
<reference key="18">
    <citation type="journal article" date="2002" name="Proc. Natl. Acad. Sci. U.S.A.">
        <title>A fragment of human TrpRS as a potent antagonist of ocular angiogenesis.</title>
        <authorList>
            <person name="Otani A."/>
            <person name="Slike B.M."/>
            <person name="Dorrell M.I."/>
            <person name="Hood J."/>
            <person name="Kinder K."/>
            <person name="Ewalt K.L."/>
            <person name="Cheresh D."/>
            <person name="Schimmel P."/>
            <person name="Friedlander M."/>
        </authorList>
    </citation>
    <scope>FUNCTION (T2-TRPRS)</scope>
</reference>
<reference key="19">
    <citation type="journal article" date="2003" name="Proc. Natl. Acad. Sci. U.S.A.">
        <title>Biologically active fragment of a human tRNA synthetase inhibits fluid shear stress-activated responses of endothelial cells.</title>
        <authorList>
            <person name="Tzima E."/>
            <person name="Reader J.S."/>
            <person name="Irani-Tehrani M."/>
            <person name="Ewalt K.L."/>
            <person name="Schwartz M.A."/>
            <person name="Schimmel P."/>
        </authorList>
    </citation>
    <scope>FUNCTION (T2-TRPRS)</scope>
</reference>
<reference key="20">
    <citation type="journal article" date="2005" name="Biochemistry">
        <title>Oxidative stress-responsive intracellular regulation specific for the angiostatic form of human tryptophanyl-tRNA synthetase.</title>
        <authorList>
            <person name="Wakasugi K."/>
            <person name="Nakano T."/>
            <person name="Morishima I."/>
        </authorList>
    </citation>
    <scope>INTERACTION WITH GAPDH</scope>
</reference>
<reference key="21">
    <citation type="journal article" date="2008" name="Proc. Natl. Acad. Sci. U.S.A.">
        <title>A quantitative atlas of mitotic phosphorylation.</title>
        <authorList>
            <person name="Dephoure N."/>
            <person name="Zhou C."/>
            <person name="Villen J."/>
            <person name="Beausoleil S.A."/>
            <person name="Bakalarski C.E."/>
            <person name="Elledge S.J."/>
            <person name="Gygi S.P."/>
        </authorList>
    </citation>
    <scope>IDENTIFICATION BY MASS SPECTROMETRY [LARGE SCALE ANALYSIS]</scope>
    <source>
        <tissue>Cervix carcinoma</tissue>
    </source>
</reference>
<reference key="22">
    <citation type="journal article" date="2009" name="Science">
        <title>Lysine acetylation targets protein complexes and co-regulates major cellular functions.</title>
        <authorList>
            <person name="Choudhary C."/>
            <person name="Kumar C."/>
            <person name="Gnad F."/>
            <person name="Nielsen M.L."/>
            <person name="Rehman M."/>
            <person name="Walther T.C."/>
            <person name="Olsen J.V."/>
            <person name="Mann M."/>
        </authorList>
    </citation>
    <scope>IDENTIFICATION BY MASS SPECTROMETRY [LARGE SCALE ANALYSIS]</scope>
</reference>
<reference key="23">
    <citation type="journal article" date="2010" name="Sci. Signal.">
        <title>Quantitative phosphoproteomics reveals widespread full phosphorylation site occupancy during mitosis.</title>
        <authorList>
            <person name="Olsen J.V."/>
            <person name="Vermeulen M."/>
            <person name="Santamaria A."/>
            <person name="Kumar C."/>
            <person name="Miller M.L."/>
            <person name="Jensen L.J."/>
            <person name="Gnad F."/>
            <person name="Cox J."/>
            <person name="Jensen T.S."/>
            <person name="Nigg E.A."/>
            <person name="Brunak S."/>
            <person name="Mann M."/>
        </authorList>
    </citation>
    <scope>IDENTIFICATION BY MASS SPECTROMETRY [LARGE SCALE ANALYSIS]</scope>
    <source>
        <tissue>Cervix carcinoma</tissue>
    </source>
</reference>
<reference key="24">
    <citation type="journal article" date="2011" name="BMC Syst. Biol.">
        <title>Initial characterization of the human central proteome.</title>
        <authorList>
            <person name="Burkard T.R."/>
            <person name="Planyavsky M."/>
            <person name="Kaupe I."/>
            <person name="Breitwieser F.P."/>
            <person name="Buerckstuemmer T."/>
            <person name="Bennett K.L."/>
            <person name="Superti-Furga G."/>
            <person name="Colinge J."/>
        </authorList>
    </citation>
    <scope>IDENTIFICATION BY MASS SPECTROMETRY [LARGE SCALE ANALYSIS]</scope>
</reference>
<reference key="25">
    <citation type="journal article" date="2012" name="Mol. Cell. Proteomics">
        <title>Comparative large-scale characterisation of plant vs. mammal proteins reveals similar and idiosyncratic N-alpha acetylation features.</title>
        <authorList>
            <person name="Bienvenut W.V."/>
            <person name="Sumpton D."/>
            <person name="Martinez A."/>
            <person name="Lilla S."/>
            <person name="Espagne C."/>
            <person name="Meinnel T."/>
            <person name="Giglione C."/>
        </authorList>
    </citation>
    <scope>CLEAVAGE OF INITIATOR METHIONINE [LARGE SCALE ANALYSIS]</scope>
    <scope>IDENTIFICATION BY MASS SPECTROMETRY [LARGE SCALE ANALYSIS]</scope>
</reference>
<reference key="26">
    <citation type="journal article" date="2012" name="Proc. Natl. Acad. Sci. U.S.A.">
        <title>N-terminal acetylome analyses and functional insights of the N-terminal acetyltransferase NatB.</title>
        <authorList>
            <person name="Van Damme P."/>
            <person name="Lasa M."/>
            <person name="Polevoda B."/>
            <person name="Gazquez C."/>
            <person name="Elosegui-Artola A."/>
            <person name="Kim D.S."/>
            <person name="De Juan-Pardo E."/>
            <person name="Demeyer K."/>
            <person name="Hole K."/>
            <person name="Larrea E."/>
            <person name="Timmerman E."/>
            <person name="Prieto J."/>
            <person name="Arnesen T."/>
            <person name="Sherman F."/>
            <person name="Gevaert K."/>
            <person name="Aldabe R."/>
        </authorList>
    </citation>
    <scope>IDENTIFICATION BY MASS SPECTROMETRY [LARGE SCALE ANALYSIS]</scope>
</reference>
<reference key="27">
    <citation type="journal article" date="2013" name="J. Proteome Res.">
        <title>Toward a comprehensive characterization of a human cancer cell phosphoproteome.</title>
        <authorList>
            <person name="Zhou H."/>
            <person name="Di Palma S."/>
            <person name="Preisinger C."/>
            <person name="Peng M."/>
            <person name="Polat A.N."/>
            <person name="Heck A.J."/>
            <person name="Mohammed S."/>
        </authorList>
    </citation>
    <scope>PHOSPHORYLATION [LARGE SCALE ANALYSIS] AT SER-351</scope>
    <scope>IDENTIFICATION BY MASS SPECTROMETRY [LARGE SCALE ANALYSIS]</scope>
    <source>
        <tissue>Erythroleukemia</tissue>
    </source>
</reference>
<reference key="28">
    <citation type="journal article" date="2017" name="Brain">
        <title>A recurrent WARS mutation is a novel cause of autosomal dominant distal hereditary motor neuropathy.</title>
        <authorList>
            <person name="Tsai P.C."/>
            <person name="Soong B.W."/>
            <person name="Mademan I."/>
            <person name="Huang Y.H."/>
            <person name="Liu C.R."/>
            <person name="Hsiao C.T."/>
            <person name="Wu H.T."/>
            <person name="Liu T.T."/>
            <person name="Liu Y.T."/>
            <person name="Tseng Y.T."/>
            <person name="Lin K.P."/>
            <person name="Yang U.C."/>
            <person name="Chung K.W."/>
            <person name="Choi B.O."/>
            <person name="Nicholson G.A."/>
            <person name="Kennerson M.L."/>
            <person name="Chan C.C."/>
            <person name="De Jonghe P."/>
            <person name="Cheng T.H."/>
            <person name="Liao Y.C."/>
            <person name="Zuechner S."/>
            <person name="Baets J."/>
            <person name="Lee Y.C."/>
        </authorList>
    </citation>
    <scope>FUNCTION</scope>
    <scope>CATALYTIC ACTIVITY</scope>
    <scope>SUBUNIT</scope>
    <scope>INVOLVEMENT IN HMND9</scope>
    <scope>VARIANT HMND9 ARG-257</scope>
    <scope>VARIANT SER-443</scope>
    <scope>CHARACTERIZATION OF VARIANT HMND9 ARG-257</scope>
</reference>
<reference key="29">
    <citation type="journal article" date="2003" name="Proc. Natl. Acad. Sci. U.S.A.">
        <title>Crystal structures that suggest late development of genetic code components for differentiating aromatic side chains.</title>
        <authorList>
            <person name="Yang X.-L."/>
            <person name="Otero F.J."/>
            <person name="Skene R.J."/>
            <person name="McRee D.E."/>
            <person name="Schimmel P."/>
            <person name="Ribas de Pouplana L."/>
        </authorList>
    </citation>
    <scope>X-RAY CRYSTALLOGRAPHY (2.1 ANGSTROMS) OF 1-466</scope>
</reference>
<reference key="30">
    <citation type="journal article" date="2004" name="J. Biol. Chem.">
        <title>Crystal structure of human tryptophanyl-tRNA synthetase catalytic fragment: insights into substrate recognition, tRNA binding, and angiogenesis activity.</title>
        <authorList>
            <person name="Yu Y."/>
            <person name="Liu Y."/>
            <person name="Shen N."/>
            <person name="Xu X."/>
            <person name="Xu F."/>
            <person name="Jia J."/>
            <person name="Jin Y."/>
            <person name="Arnold E."/>
            <person name="Ding J."/>
        </authorList>
    </citation>
    <scope>X-RAY CRYSTALLOGRAPHY (2.5 ANGSTROMS) OF 94-471</scope>
</reference>
<reference key="31">
    <citation type="journal article" date="2006" name="Science">
        <title>The consensus coding sequences of human breast and colorectal cancers.</title>
        <authorList>
            <person name="Sjoeblom T."/>
            <person name="Jones S."/>
            <person name="Wood L.D."/>
            <person name="Parsons D.W."/>
            <person name="Lin J."/>
            <person name="Barber T.D."/>
            <person name="Mandelker D."/>
            <person name="Leary R.J."/>
            <person name="Ptak J."/>
            <person name="Silliman N."/>
            <person name="Szabo S."/>
            <person name="Buckhaults P."/>
            <person name="Farrell C."/>
            <person name="Meeh P."/>
            <person name="Markowitz S.D."/>
            <person name="Willis J."/>
            <person name="Dawson D."/>
            <person name="Willson J.K.V."/>
            <person name="Gazdar A.F."/>
            <person name="Hartigan J."/>
            <person name="Wu L."/>
            <person name="Liu C."/>
            <person name="Parmigiani G."/>
            <person name="Park B.H."/>
            <person name="Bachman K.E."/>
            <person name="Papadopoulos N."/>
            <person name="Vogelstein B."/>
            <person name="Kinzler K.W."/>
            <person name="Velculescu V.E."/>
        </authorList>
    </citation>
    <scope>VARIANT [LARGE SCALE ANALYSIS] ASP-455</scope>
</reference>
<reference key="32">
    <citation type="journal article" date="2022" name="Neurol. Sci.">
        <title>Four pedigrees with aminoacyl-tRNA synthetase abnormalities.</title>
        <authorList>
            <person name="Okamoto N."/>
            <person name="Miya F."/>
            <person name="Tsunoda T."/>
            <person name="Kanemura Y."/>
            <person name="Saitoh S."/>
            <person name="Kato M."/>
            <person name="Yanagi K."/>
            <person name="Kaname T."/>
            <person name="Kosaki K."/>
        </authorList>
    </citation>
    <scope>INVOLVEMENT IN NEDMSBA</scope>
    <scope>VARIANTS NEDMSBA THR-333 AND TRP-448</scope>
</reference>
<reference key="33">
    <citation type="journal article" date="2019" name="Brain">
        <title>A novel WARS mutation causes distal hereditary motor neuropathy in a Chinese family.</title>
        <authorList>
            <person name="Li J.Q."/>
            <person name="Dong H.L."/>
            <person name="Chen C.X."/>
            <person name="Wu Z.Y."/>
        </authorList>
    </citation>
    <scope>VARIANT HMND9 TYR-138</scope>
</reference>
<reference key="34">
    <citation type="journal article" date="2019" name="Clin. Genet.">
        <title>A novel WARS mutation (p.Asp314Gly) identified in a Chinese distal hereditary motor neuropathy family.</title>
        <authorList>
            <person name="Wang B."/>
            <person name="Li X."/>
            <person name="Huang S."/>
            <person name="Zhao H."/>
            <person name="Liu J."/>
            <person name="Hu Z."/>
            <person name="Lin Z."/>
            <person name="Liu L."/>
            <person name="Xie Y."/>
            <person name="Jin Q."/>
            <person name="Zhao H."/>
            <person name="Tang B."/>
            <person name="Niu Q."/>
            <person name="Zhang R."/>
        </authorList>
    </citation>
    <scope>VARIANT HMND9 GLY-314</scope>
</reference>
<reference key="35">
    <citation type="journal article" date="2022" name="Hum. Mutat.">
        <title>WARS1 and SARS1: Two tRNA synthetases implicated in autosomal recessive microcephaly.</title>
        <authorList>
            <person name="Boegershausen N."/>
            <person name="Krawczyk H.E."/>
            <person name="Jamra R.A."/>
            <person name="Lin S.J."/>
            <person name="Yigit G."/>
            <person name="Huening I."/>
            <person name="Polo A.M."/>
            <person name="Vona B."/>
            <person name="Huang K."/>
            <person name="Schmidt J."/>
            <person name="Altmueller J."/>
            <person name="Luppe J."/>
            <person name="Platzer K."/>
            <person name="Doergeloh B.B."/>
            <person name="Busche A."/>
            <person name="Biskup S."/>
            <person name="Mendes M.I."/>
            <person name="Smith D.E.C."/>
            <person name="Salomons G.S."/>
            <person name="Zibat A."/>
            <person name="Bueltmann E."/>
            <person name="Nuernberg P."/>
            <person name="Spielmann M."/>
            <person name="Lemke J.R."/>
            <person name="Li Y."/>
            <person name="Zenker M."/>
            <person name="Varshney G.K."/>
            <person name="Hillen H.S."/>
            <person name="Kratz C.P."/>
            <person name="Wollnik B."/>
        </authorList>
    </citation>
    <scope>VARIANT NEDMSBA CYS-133</scope>
    <scope>CHARACTERIZATION OF VARIANT NEDMSBA CYS-133</scope>
</reference>
<reference key="36">
    <citation type="journal article" date="2022" name="Hum. Mutat.">
        <title>Biallelic variants in WARS1 cause a highly variable neurodevelopmental syndrome and implicate a critical exon for normal auditory function.</title>
        <authorList>
            <person name="Lin S.J."/>
            <person name="Vona B."/>
            <person name="Porter H.M."/>
            <person name="Izadi M."/>
            <person name="Huang K."/>
            <person name="Lacassie Y."/>
            <person name="Rosenfeld J.A."/>
            <person name="Khan S."/>
            <person name="Petree C."/>
            <person name="Ali T.A."/>
            <person name="Muhammad N."/>
            <person name="Khan S.A."/>
            <person name="Muhammad N."/>
            <person name="Liu P."/>
            <person name="Haymon M.L."/>
            <person name="Rueschendorf F."/>
            <person name="Kong I.K."/>
            <person name="Schnapp L."/>
            <person name="Shur N."/>
            <person name="Chorich L."/>
            <person name="Layman L."/>
            <person name="Haaf T."/>
            <person name="Pourkarimi E."/>
            <person name="Kim H.G."/>
            <person name="Varshney G.K."/>
        </authorList>
    </citation>
    <scope>VARIANT NEDMSBA ASN-419</scope>
    <scope>CHARACTERIZATION OF VARIANTS NEDMSBA THR-333 AND TRP-448</scope>
</reference>
<sequence length="471" mass="53165">MPNSEPASLLELFNSIATQGELVRSLKAGNASKDEIDSAVKMLVSLKMSYKAAAGEDYKADCPPGNPAPTSNHGPDATEAEEDFVDPWTVQTSSAKGIDYDKLIVRFGSSKIDKELINRIERATGQRPHHFLRRGIFFSHRDMNQVLDAYENKKPFYLYTGRGPSSEAMHVGHLIPFIFTKWLQDVFNVPLVIQMTDDEKYLWKDLTLDQAYSYAVENAKDIIACGFDINKTFIFSDLDYMGMSSGFYKNVVKIQKHVTFNQVKGIFGFTDSDCIGKISFPAIQAAPSFSNSFPQIFRDRTDIQCLIPCAIDQDPYFRMTRDVAPRIGYPKPALLHSTFFPALQGAQTKMSASDPNSSIFLTDTAKQIKTKVNKHAFSGGRDTIEEHRQFGGNCDVDVSFMYLTFFLEDDDKLEQIRKDYTSGAMLTGELKKALIEVLQPLIAEHQARRKEVTDEIVKEFMTPRKLSFDFQ</sequence>
<comment type="function">
    <text evidence="6 10 11">Catalyzes the attachment of tryptophan to tRNA(Trp) in a two-step reaction: tryptophan is first activated by ATP to form Trp-AMP and then transferred to the acceptor end of the tRNA(Trp).</text>
</comment>
<comment type="function">
    <molecule>Isoform 1</molecule>
    <text evidence="4 5">Has no angiostatic activity.</text>
</comment>
<comment type="function">
    <molecule>T2-TrpRS</molecule>
    <text evidence="4 5 7">Possesses an angiostatic activity but has no aminoacylation activity (PubMed:11773625, PubMed:11773626, PubMed:14630953). Inhibits fluid shear stress-activated responses of endothelial cells (PubMed:14630953). Regulates ERK, Akt, and eNOS activation pathways that are associated with angiogenesis, cytoskeletal reorganization and shear stress-responsive gene expression (PubMed:14630953).</text>
</comment>
<comment type="function">
    <molecule>Isoform 2</molecule>
    <text evidence="4 5">Has an angiostatic activity.</text>
</comment>
<comment type="catalytic activity">
    <reaction evidence="10 11">
        <text>tRNA(Trp) + L-tryptophan + ATP = L-tryptophyl-tRNA(Trp) + AMP + diphosphate + H(+)</text>
        <dbReference type="Rhea" id="RHEA:24080"/>
        <dbReference type="Rhea" id="RHEA-COMP:9671"/>
        <dbReference type="Rhea" id="RHEA-COMP:9705"/>
        <dbReference type="ChEBI" id="CHEBI:15378"/>
        <dbReference type="ChEBI" id="CHEBI:30616"/>
        <dbReference type="ChEBI" id="CHEBI:33019"/>
        <dbReference type="ChEBI" id="CHEBI:57912"/>
        <dbReference type="ChEBI" id="CHEBI:78442"/>
        <dbReference type="ChEBI" id="CHEBI:78535"/>
        <dbReference type="ChEBI" id="CHEBI:456215"/>
        <dbReference type="EC" id="6.1.1.2"/>
    </reaction>
    <physiologicalReaction direction="left-to-right" evidence="11">
        <dbReference type="Rhea" id="RHEA:24081"/>
    </physiologicalReaction>
</comment>
<comment type="subunit">
    <text evidence="8 11">Homodimer (PubMed:28369220). Interacts with an oxidized form of GAPDH. GAPDH stimulates the aminoacylation activity of isoform 2 (PubMed:15628863).</text>
</comment>
<comment type="interaction">
    <interactant intactId="EBI-721244">
        <id>P23381</id>
    </interactant>
    <interactant intactId="EBI-2903122">
        <id>P33151</id>
        <label>CDH5</label>
    </interactant>
    <organismsDiffer>false</organismsDiffer>
    <experiments>4</experiments>
</comment>
<comment type="interaction">
    <interactant intactId="EBI-721244">
        <id>P23381</id>
    </interactant>
    <interactant intactId="EBI-710997">
        <id>P54274</id>
        <label>TERF1</label>
    </interactant>
    <organismsDiffer>false</organismsDiffer>
    <experiments>2</experiments>
</comment>
<comment type="subcellular location">
    <subcellularLocation>
        <location evidence="20">Cytoplasm</location>
    </subcellularLocation>
</comment>
<comment type="alternative products">
    <event type="alternative splicing"/>
    <isoform>
        <id>P23381-1</id>
        <name>1</name>
        <sequence type="displayed"/>
    </isoform>
    <isoform>
        <id>P23381-2</id>
        <name>2</name>
        <name>mini TrpRS</name>
        <sequence type="described" ref="VSP_038221"/>
    </isoform>
</comment>
<comment type="induction">
    <text evidence="17">By IFNG/IFN-gamma.</text>
</comment>
<comment type="PTM">
    <text evidence="5">Proteolytic cleavage generates 2 forms; T1-TrpRS and T2-TrpRS.</text>
</comment>
<comment type="disease" evidence="11 12 13">
    <disease id="DI-05119">
        <name>Neuronopathy, distal hereditary motor, autosomal dominant 9</name>
        <acronym>HMND9</acronym>
        <description>A form of distal hereditary motor neuronopathy, a heterogeneous group of neuromuscular disorders caused by selective degeneration of motor neurons in the anterior horn of the spinal cord, without sensory deficit in the posterior horn. The overall clinical picture consists of a classical distal muscular atrophy syndrome in the legs without clinical sensory loss. The disease starts with weakness and wasting of distal muscles of the anterior tibial and peroneal compartments of the legs. Later on, weakness and atrophy may expand to the proximal muscles of the lower limbs and/or to the distal upper limbs. HMND9 is characterized by juvenile onset of slowly progressive distal muscle weakness and atrophy affecting both the lower and upper limbs.</description>
        <dbReference type="MIM" id="617721"/>
    </disease>
    <text>The disease may be caused by variants affecting the gene represented in this entry.</text>
</comment>
<comment type="disease" evidence="14 15 16">
    <disease id="DI-06654">
        <name>Neurodevelopmental disorder with microcephaly and speech delay, with or without brain abnormalities</name>
        <acronym>NEDMSBA</acronym>
        <description>An autosomal recessive disorder apparent from early infancy and characterized by global developmental delay, delayed or absent walking, impaired intellectual development, poor or absent speech, and postnatal progressive microcephaly. Additional variable features include cortical visual impairment, seizures, hypotonia, spasticity, and sensorineural deafness. Brain anomalies including myelination defects, cortical atrophy, or thin corpus callosum are present in most patients.</description>
        <dbReference type="MIM" id="620317"/>
    </disease>
    <text>The disease may be caused by variants affecting the gene represented in this entry.</text>
</comment>
<comment type="similarity">
    <text evidence="20">Belongs to the class-I aminoacyl-tRNA synthetase family.</text>
</comment>
<evidence type="ECO:0000250" key="1">
    <source>
        <dbReference type="UniProtKB" id="P32921"/>
    </source>
</evidence>
<evidence type="ECO:0000255" key="2">
    <source>
        <dbReference type="PROSITE-ProRule" id="PRU00531"/>
    </source>
</evidence>
<evidence type="ECO:0000256" key="3">
    <source>
        <dbReference type="SAM" id="MobiDB-lite"/>
    </source>
</evidence>
<evidence type="ECO:0000269" key="4">
    <source>
    </source>
</evidence>
<evidence type="ECO:0000269" key="5">
    <source>
    </source>
</evidence>
<evidence type="ECO:0000269" key="6">
    <source>
    </source>
</evidence>
<evidence type="ECO:0000269" key="7">
    <source>
    </source>
</evidence>
<evidence type="ECO:0000269" key="8">
    <source>
    </source>
</evidence>
<evidence type="ECO:0000269" key="9">
    <source>
    </source>
</evidence>
<evidence type="ECO:0000269" key="10">
    <source>
    </source>
</evidence>
<evidence type="ECO:0000269" key="11">
    <source>
    </source>
</evidence>
<evidence type="ECO:0000269" key="12">
    <source>
    </source>
</evidence>
<evidence type="ECO:0000269" key="13">
    <source>
    </source>
</evidence>
<evidence type="ECO:0000269" key="14">
    <source>
    </source>
</evidence>
<evidence type="ECO:0000269" key="15">
    <source>
    </source>
</evidence>
<evidence type="ECO:0000269" key="16">
    <source>
    </source>
</evidence>
<evidence type="ECO:0000269" key="17">
    <source>
    </source>
</evidence>
<evidence type="ECO:0000269" key="18">
    <source ref="13"/>
</evidence>
<evidence type="ECO:0000303" key="19">
    <source>
    </source>
</evidence>
<evidence type="ECO:0000305" key="20"/>
<evidence type="ECO:0000312" key="21">
    <source>
        <dbReference type="HGNC" id="HGNC:12729"/>
    </source>
</evidence>
<evidence type="ECO:0007744" key="22">
    <source>
    </source>
</evidence>
<evidence type="ECO:0007744" key="23">
    <source>
    </source>
</evidence>
<evidence type="ECO:0007829" key="24">
    <source>
        <dbReference type="PDB" id="1R6T"/>
    </source>
</evidence>
<evidence type="ECO:0007829" key="25">
    <source>
        <dbReference type="PDB" id="1R6U"/>
    </source>
</evidence>
<evidence type="ECO:0007829" key="26">
    <source>
        <dbReference type="PDB" id="1ULH"/>
    </source>
</evidence>
<evidence type="ECO:0007829" key="27">
    <source>
        <dbReference type="PDB" id="2AZX"/>
    </source>
</evidence>
<evidence type="ECO:0007829" key="28">
    <source>
        <dbReference type="PDB" id="5UJI"/>
    </source>
</evidence>
<evidence type="ECO:0007829" key="29">
    <source>
        <dbReference type="PDB" id="5UJJ"/>
    </source>
</evidence>
<name>SYWC_HUMAN</name>
<accession>P23381</accession>
<accession>A6NGN1</accession>
<accession>A6NID3</accession>
<accession>P78535</accession>
<accession>Q502Y0</accession>
<accession>Q53XB6</accession>
<accession>Q9UDI5</accession>
<accession>Q9UDL3</accession>
<feature type="initiator methionine" description="Removed" evidence="17 18 22">
    <location>
        <position position="1"/>
    </location>
</feature>
<feature type="chain" id="PRO_0000136738" description="Tryptophan--tRNA ligase, cytoplasmic">
    <location>
        <begin position="2"/>
        <end position="471"/>
    </location>
</feature>
<feature type="chain" id="PRO_0000386461" description="T1-TrpRS" evidence="5">
    <location>
        <begin position="71"/>
        <end position="471"/>
    </location>
</feature>
<feature type="chain" id="PRO_0000386462" description="T2-TrpRS" evidence="5">
    <location>
        <begin position="94"/>
        <end position="471"/>
    </location>
</feature>
<feature type="domain" description="WHEP-TRS" evidence="2">
    <location>
        <begin position="8"/>
        <end position="64"/>
    </location>
</feature>
<feature type="region of interest" description="Disordered" evidence="3">
    <location>
        <begin position="59"/>
        <end position="79"/>
    </location>
</feature>
<feature type="short sequence motif" description="'HIGH' region" evidence="6">
    <location>
        <begin position="164"/>
        <end position="173"/>
    </location>
</feature>
<feature type="short sequence motif" description="'KMSKS' region" evidence="6">
    <location>
        <begin position="349"/>
        <end position="353"/>
    </location>
</feature>
<feature type="modified residue" description="N6-succinyllysine" evidence="1">
    <location>
        <position position="154"/>
    </location>
</feature>
<feature type="modified residue" description="Phosphoserine" evidence="23">
    <location>
        <position position="351"/>
    </location>
</feature>
<feature type="splice variant" id="VSP_038221" description="In isoform 2." evidence="19">
    <location>
        <begin position="1"/>
        <end position="41"/>
    </location>
</feature>
<feature type="sequence variant" id="VAR_052406" description="In dbSNP:rs2234521.">
    <original>A</original>
    <variation>S</variation>
    <location>
        <position position="54"/>
    </location>
</feature>
<feature type="sequence variant" id="VAR_088482" evidence="16">
    <original>D</original>
    <variation>A</variation>
    <location>
        <position position="83"/>
    </location>
</feature>
<feature type="sequence variant" id="VAR_088483" description="In NEDMSBA; uncertain significance; loss of function; failed to rescue both the eye and head size phenotypes in a zebrafish wars1-knockout disease model." evidence="15">
    <original>R</original>
    <variation>C</variation>
    <location>
        <position position="133"/>
    </location>
</feature>
<feature type="sequence variant" id="VAR_088484" description="In HMND9; uncertain significance." evidence="13">
    <original>F</original>
    <variation>Y</variation>
    <location>
        <position position="138"/>
    </location>
</feature>
<feature type="sequence variant" id="VAR_080407" description="In HMND9; uncertain significance; decreased tryptophan-tRNA ligase activity; dominant negative effect; decreased general protein synthesis; decreased cell viability; no effect on homodimerization." evidence="11">
    <original>H</original>
    <variation>R</variation>
    <location>
        <position position="257"/>
    </location>
</feature>
<feature type="sequence variant" id="VAR_088485" description="In HMND9; uncertain significance." evidence="12">
    <original>D</original>
    <variation>G</variation>
    <location>
        <position position="314"/>
    </location>
</feature>
<feature type="sequence variant" id="VAR_088486" description="In NEDMSBA; uncertain significance; when tested in a wars1-knockout zebrafish disease model it partially rescues the ocular defects and is able to rescue hearing deficits and head abnormalities." evidence="14 16">
    <original>A</original>
    <variation>T</variation>
    <location>
        <position position="333"/>
    </location>
</feature>
<feature type="sequence variant" id="VAR_088487" description="In NEDMSBA; uncertain significance; when tested in a wars1-knockout zebrafish disease model is able to rescue head and eye sizes partially while the hearing phenotype was rescued completely." evidence="16">
    <original>D</original>
    <variation>N</variation>
    <location>
        <position position="419"/>
    </location>
</feature>
<feature type="sequence variant" id="VAR_080408" description="In dbSNP:rs139914390." evidence="11">
    <original>A</original>
    <variation>S</variation>
    <location>
        <position position="443"/>
    </location>
</feature>
<feature type="sequence variant" id="VAR_088488" description="In NEDMSBA; uncertain significance; when tested in a zebrafish wars1-knockout disease model it fails to rescue head abnormalities while it partially rescues the ocular defects and is able to fully rescue hearing deficits." evidence="14 16">
    <original>R</original>
    <variation>W</variation>
    <location>
        <position position="448"/>
    </location>
</feature>
<feature type="sequence variant" id="VAR_036466" description="In a breast cancer sample; somatic mutation." evidence="9">
    <original>E</original>
    <variation>D</variation>
    <location>
        <position position="455"/>
    </location>
</feature>
<feature type="sequence conflict" description="In Ref. 3; AAA61298." evidence="20" ref="3">
    <original>SY</original>
    <variation>GD</variation>
    <location>
        <begin position="213"/>
        <end position="214"/>
    </location>
</feature>
<feature type="sequence conflict" description="In Ref. 9; AAH95453." evidence="20" ref="9">
    <original>A</original>
    <variation>V</variation>
    <location>
        <position position="310"/>
    </location>
</feature>
<feature type="sequence conflict" description="In Ref. 4; CAA44450." evidence="20" ref="4">
    <original>A</original>
    <variation>R</variation>
    <location>
        <position position="424"/>
    </location>
</feature>
<feature type="sequence conflict" description="In Ref. 9; AAH95453." evidence="20" ref="9">
    <original>Q</original>
    <variation>L</variation>
    <location>
        <position position="439"/>
    </location>
</feature>
<feature type="helix" evidence="24">
    <location>
        <begin position="8"/>
        <end position="28"/>
    </location>
</feature>
<feature type="helix" evidence="24">
    <location>
        <begin position="33"/>
        <end position="53"/>
    </location>
</feature>
<feature type="strand" evidence="24">
    <location>
        <begin position="54"/>
        <end position="56"/>
    </location>
</feature>
<feature type="strand" evidence="25">
    <location>
        <begin position="84"/>
        <end position="86"/>
    </location>
</feature>
<feature type="strand" evidence="25">
    <location>
        <begin position="89"/>
        <end position="91"/>
    </location>
</feature>
<feature type="turn" evidence="25">
    <location>
        <begin position="100"/>
        <end position="102"/>
    </location>
</feature>
<feature type="helix" evidence="25">
    <location>
        <begin position="103"/>
        <end position="106"/>
    </location>
</feature>
<feature type="helix" evidence="25">
    <location>
        <begin position="114"/>
        <end position="124"/>
    </location>
</feature>
<feature type="helix" evidence="25">
    <location>
        <begin position="130"/>
        <end position="133"/>
    </location>
</feature>
<feature type="strand" evidence="25">
    <location>
        <begin position="136"/>
        <end position="142"/>
    </location>
</feature>
<feature type="helix" evidence="25">
    <location>
        <begin position="143"/>
        <end position="150"/>
    </location>
</feature>
<feature type="turn" evidence="25">
    <location>
        <begin position="151"/>
        <end position="153"/>
    </location>
</feature>
<feature type="strand" evidence="25">
    <location>
        <begin position="156"/>
        <end position="162"/>
    </location>
</feature>
<feature type="strand" evidence="29">
    <location>
        <begin position="166"/>
        <end position="168"/>
    </location>
</feature>
<feature type="helix" evidence="25">
    <location>
        <begin position="171"/>
        <end position="187"/>
    </location>
</feature>
<feature type="strand" evidence="25">
    <location>
        <begin position="191"/>
        <end position="195"/>
    </location>
</feature>
<feature type="helix" evidence="25">
    <location>
        <begin position="197"/>
        <end position="203"/>
    </location>
</feature>
<feature type="helix" evidence="25">
    <location>
        <begin position="208"/>
        <end position="223"/>
    </location>
</feature>
<feature type="turn" evidence="25">
    <location>
        <begin position="224"/>
        <end position="226"/>
    </location>
</feature>
<feature type="helix" evidence="25">
    <location>
        <begin position="229"/>
        <end position="231"/>
    </location>
</feature>
<feature type="strand" evidence="25">
    <location>
        <begin position="232"/>
        <end position="236"/>
    </location>
</feature>
<feature type="helix" evidence="25">
    <location>
        <begin position="237"/>
        <end position="240"/>
    </location>
</feature>
<feature type="helix" evidence="25">
    <location>
        <begin position="241"/>
        <end position="243"/>
    </location>
</feature>
<feature type="helix" evidence="25">
    <location>
        <begin position="247"/>
        <end position="256"/>
    </location>
</feature>
<feature type="helix" evidence="25">
    <location>
        <begin position="260"/>
        <end position="267"/>
    </location>
</feature>
<feature type="strand" evidence="26">
    <location>
        <begin position="271"/>
        <end position="274"/>
    </location>
</feature>
<feature type="helix" evidence="25">
    <location>
        <begin position="275"/>
        <end position="285"/>
    </location>
</feature>
<feature type="helix" evidence="25">
    <location>
        <begin position="286"/>
        <end position="288"/>
    </location>
</feature>
<feature type="helix" evidence="25">
    <location>
        <begin position="290"/>
        <end position="292"/>
    </location>
</feature>
<feature type="helix" evidence="25">
    <location>
        <begin position="294"/>
        <end position="297"/>
    </location>
</feature>
<feature type="strand" evidence="25">
    <location>
        <begin position="304"/>
        <end position="310"/>
    </location>
</feature>
<feature type="helix" evidence="25">
    <location>
        <begin position="311"/>
        <end position="313"/>
    </location>
</feature>
<feature type="helix" evidence="25">
    <location>
        <begin position="314"/>
        <end position="323"/>
    </location>
</feature>
<feature type="helix" evidence="25">
    <location>
        <begin position="324"/>
        <end position="327"/>
    </location>
</feature>
<feature type="strand" evidence="25">
    <location>
        <begin position="333"/>
        <end position="337"/>
    </location>
</feature>
<feature type="strand" evidence="25">
    <location>
        <begin position="345"/>
        <end position="349"/>
    </location>
</feature>
<feature type="strand" evidence="25">
    <location>
        <begin position="354"/>
        <end position="357"/>
    </location>
</feature>
<feature type="strand" evidence="27">
    <location>
        <begin position="360"/>
        <end position="362"/>
    </location>
</feature>
<feature type="helix" evidence="25">
    <location>
        <begin position="365"/>
        <end position="374"/>
    </location>
</feature>
<feature type="strand" evidence="28">
    <location>
        <begin position="379"/>
        <end position="381"/>
    </location>
</feature>
<feature type="helix" evidence="25">
    <location>
        <begin position="384"/>
        <end position="390"/>
    </location>
</feature>
<feature type="turn" evidence="25">
    <location>
        <begin position="394"/>
        <end position="396"/>
    </location>
</feature>
<feature type="helix" evidence="25">
    <location>
        <begin position="398"/>
        <end position="406"/>
    </location>
</feature>
<feature type="helix" evidence="25">
    <location>
        <begin position="410"/>
        <end position="422"/>
    </location>
</feature>
<feature type="strand" evidence="25">
    <location>
        <begin position="423"/>
        <end position="425"/>
    </location>
</feature>
<feature type="helix" evidence="25">
    <location>
        <begin position="430"/>
        <end position="450"/>
    </location>
</feature>
<feature type="helix" evidence="25">
    <location>
        <begin position="454"/>
        <end position="460"/>
    </location>
</feature>
<protein>
    <recommendedName>
        <fullName evidence="20">Tryptophan--tRNA ligase, cytoplasmic</fullName>
        <ecNumber evidence="10 11">6.1.1.2</ecNumber>
    </recommendedName>
    <alternativeName>
        <fullName>Interferon-induced protein 53</fullName>
        <shortName>IFP53</shortName>
    </alternativeName>
    <alternativeName>
        <fullName>Tryptophanyl-tRNA synthetase</fullName>
        <shortName>TrpRS</shortName>
        <shortName>hWRS</shortName>
    </alternativeName>
    <component>
        <recommendedName>
            <fullName>T1-TrpRS</fullName>
        </recommendedName>
    </component>
    <component>
        <recommendedName>
            <fullName>T2-TrpRS</fullName>
        </recommendedName>
    </component>
</protein>